<organism>
    <name type="scientific">Acinetobacter baylyi (strain ATCC 33305 / BD413 / ADP1)</name>
    <dbReference type="NCBI Taxonomy" id="62977"/>
    <lineage>
        <taxon>Bacteria</taxon>
        <taxon>Pseudomonadati</taxon>
        <taxon>Pseudomonadota</taxon>
        <taxon>Gammaproteobacteria</taxon>
        <taxon>Moraxellales</taxon>
        <taxon>Moraxellaceae</taxon>
        <taxon>Acinetobacter</taxon>
    </lineage>
</organism>
<feature type="chain" id="PRO_0000301135" description="Sec-independent protein translocase protein TatB">
    <location>
        <begin position="1"/>
        <end position="152"/>
    </location>
</feature>
<feature type="transmembrane region" description="Helical" evidence="1">
    <location>
        <begin position="1"/>
        <end position="21"/>
    </location>
</feature>
<accession>Q6FER0</accession>
<gene>
    <name evidence="1" type="primary">tatB</name>
    <name type="ordered locus">ACIAD0522</name>
</gene>
<evidence type="ECO:0000255" key="1">
    <source>
        <dbReference type="HAMAP-Rule" id="MF_00237"/>
    </source>
</evidence>
<protein>
    <recommendedName>
        <fullName evidence="1">Sec-independent protein translocase protein TatB</fullName>
    </recommendedName>
</protein>
<name>TATB_ACIAD</name>
<comment type="function">
    <text evidence="1">Part of the twin-arginine translocation (Tat) system that transports large folded proteins containing a characteristic twin-arginine motif in their signal peptide across membranes. Together with TatC, TatB is part of a receptor directly interacting with Tat signal peptides. TatB may form an oligomeric binding site that transiently accommodates folded Tat precursor proteins before their translocation.</text>
</comment>
<comment type="subunit">
    <text evidence="1">The Tat system comprises two distinct complexes: a TatABC complex, containing multiple copies of TatA, TatB and TatC subunits, and a separate TatA complex, containing only TatA subunits. Substrates initially bind to the TatABC complex, which probably triggers association of the separate TatA complex to form the active translocon.</text>
</comment>
<comment type="subcellular location">
    <subcellularLocation>
        <location evidence="1">Cell inner membrane</location>
        <topology evidence="1">Single-pass membrane protein</topology>
    </subcellularLocation>
</comment>
<comment type="similarity">
    <text evidence="1">Belongs to the TatB family.</text>
</comment>
<sequence length="152" mass="17680">MLDVGFGELFCFGIIALLVLGPDKLPVAARFAGRWYARIKRYISNIQNEIDRELNLSEFRKEMQDELDRLHTLEQTMQARLKEIEKASTEKIAEQPKQPIESEPSITPQKYIFCITPQTIVPFCHQKQHYQQPERYNDLVLESSSVELKIAV</sequence>
<dbReference type="EMBL" id="CR543861">
    <property type="protein sequence ID" value="CAG67448.1"/>
    <property type="molecule type" value="Genomic_DNA"/>
</dbReference>
<dbReference type="RefSeq" id="WP_004920102.1">
    <property type="nucleotide sequence ID" value="NC_005966.1"/>
</dbReference>
<dbReference type="SMR" id="Q6FER0"/>
<dbReference type="STRING" id="202950.GCA_001485005_00761"/>
<dbReference type="GeneID" id="45233002"/>
<dbReference type="KEGG" id="aci:ACIAD0522"/>
<dbReference type="eggNOG" id="COG1826">
    <property type="taxonomic scope" value="Bacteria"/>
</dbReference>
<dbReference type="HOGENOM" id="CLU_086034_1_2_6"/>
<dbReference type="OrthoDB" id="9816005at2"/>
<dbReference type="BioCyc" id="ASP62977:ACIAD_RS02370-MONOMER"/>
<dbReference type="Proteomes" id="UP000000430">
    <property type="component" value="Chromosome"/>
</dbReference>
<dbReference type="GO" id="GO:0033281">
    <property type="term" value="C:TAT protein transport complex"/>
    <property type="evidence" value="ECO:0007669"/>
    <property type="project" value="UniProtKB-UniRule"/>
</dbReference>
<dbReference type="GO" id="GO:0008320">
    <property type="term" value="F:protein transmembrane transporter activity"/>
    <property type="evidence" value="ECO:0007669"/>
    <property type="project" value="UniProtKB-UniRule"/>
</dbReference>
<dbReference type="GO" id="GO:0043953">
    <property type="term" value="P:protein transport by the Tat complex"/>
    <property type="evidence" value="ECO:0007669"/>
    <property type="project" value="UniProtKB-UniRule"/>
</dbReference>
<dbReference type="Gene3D" id="1.20.5.3310">
    <property type="match status" value="1"/>
</dbReference>
<dbReference type="HAMAP" id="MF_00237">
    <property type="entry name" value="TatB"/>
    <property type="match status" value="1"/>
</dbReference>
<dbReference type="InterPro" id="IPR003369">
    <property type="entry name" value="TatA/B/E"/>
</dbReference>
<dbReference type="InterPro" id="IPR018448">
    <property type="entry name" value="TatB"/>
</dbReference>
<dbReference type="NCBIfam" id="TIGR01410">
    <property type="entry name" value="tatB"/>
    <property type="match status" value="1"/>
</dbReference>
<dbReference type="PANTHER" id="PTHR33162">
    <property type="entry name" value="SEC-INDEPENDENT PROTEIN TRANSLOCASE PROTEIN TATA, CHLOROPLASTIC"/>
    <property type="match status" value="1"/>
</dbReference>
<dbReference type="PANTHER" id="PTHR33162:SF1">
    <property type="entry name" value="SEC-INDEPENDENT PROTEIN TRANSLOCASE PROTEIN TATA, CHLOROPLASTIC"/>
    <property type="match status" value="1"/>
</dbReference>
<dbReference type="Pfam" id="PF02416">
    <property type="entry name" value="TatA_B_E"/>
    <property type="match status" value="1"/>
</dbReference>
<dbReference type="PRINTS" id="PR01506">
    <property type="entry name" value="TATBPROTEIN"/>
</dbReference>
<keyword id="KW-0997">Cell inner membrane</keyword>
<keyword id="KW-1003">Cell membrane</keyword>
<keyword id="KW-0472">Membrane</keyword>
<keyword id="KW-0653">Protein transport</keyword>
<keyword id="KW-0811">Translocation</keyword>
<keyword id="KW-0812">Transmembrane</keyword>
<keyword id="KW-1133">Transmembrane helix</keyword>
<keyword id="KW-0813">Transport</keyword>
<reference key="1">
    <citation type="journal article" date="2004" name="Nucleic Acids Res.">
        <title>Unique features revealed by the genome sequence of Acinetobacter sp. ADP1, a versatile and naturally transformation competent bacterium.</title>
        <authorList>
            <person name="Barbe V."/>
            <person name="Vallenet D."/>
            <person name="Fonknechten N."/>
            <person name="Kreimeyer A."/>
            <person name="Oztas S."/>
            <person name="Labarre L."/>
            <person name="Cruveiller S."/>
            <person name="Robert C."/>
            <person name="Duprat S."/>
            <person name="Wincker P."/>
            <person name="Ornston L.N."/>
            <person name="Weissenbach J."/>
            <person name="Marliere P."/>
            <person name="Cohen G.N."/>
            <person name="Medigue C."/>
        </authorList>
    </citation>
    <scope>NUCLEOTIDE SEQUENCE [LARGE SCALE GENOMIC DNA]</scope>
    <source>
        <strain>ATCC 33305 / BD413 / ADP1</strain>
    </source>
</reference>
<proteinExistence type="inferred from homology"/>